<dbReference type="EMBL" id="AE000513">
    <property type="protein sequence ID" value="AAF11474.1"/>
    <property type="molecule type" value="Genomic_DNA"/>
</dbReference>
<dbReference type="PIR" id="A75337">
    <property type="entry name" value="A75337"/>
</dbReference>
<dbReference type="RefSeq" id="NP_295645.1">
    <property type="nucleotide sequence ID" value="NC_001263.1"/>
</dbReference>
<dbReference type="RefSeq" id="WP_010888557.1">
    <property type="nucleotide sequence ID" value="NC_001263.1"/>
</dbReference>
<dbReference type="FunCoup" id="Q9RT44">
    <property type="interactions" value="47"/>
</dbReference>
<dbReference type="STRING" id="243230.DR_1922"/>
<dbReference type="PaxDb" id="243230-DR_1922"/>
<dbReference type="EnsemblBacteria" id="AAF11474">
    <property type="protein sequence ID" value="AAF11474"/>
    <property type="gene ID" value="DR_1922"/>
</dbReference>
<dbReference type="KEGG" id="dra:DR_1922"/>
<dbReference type="PATRIC" id="fig|243230.17.peg.2140"/>
<dbReference type="eggNOG" id="COG0419">
    <property type="taxonomic scope" value="Bacteria"/>
</dbReference>
<dbReference type="HOGENOM" id="CLU_004785_1_2_0"/>
<dbReference type="InParanoid" id="Q9RT44"/>
<dbReference type="OrthoDB" id="9795626at2"/>
<dbReference type="Proteomes" id="UP000002524">
    <property type="component" value="Chromosome 1"/>
</dbReference>
<dbReference type="GO" id="GO:1990391">
    <property type="term" value="C:DNA repair complex"/>
    <property type="evidence" value="ECO:0000318"/>
    <property type="project" value="GO_Central"/>
</dbReference>
<dbReference type="GO" id="GO:0005524">
    <property type="term" value="F:ATP binding"/>
    <property type="evidence" value="ECO:0007669"/>
    <property type="project" value="UniProtKB-KW"/>
</dbReference>
<dbReference type="GO" id="GO:0016887">
    <property type="term" value="F:ATP hydrolysis activity"/>
    <property type="evidence" value="ECO:0007669"/>
    <property type="project" value="InterPro"/>
</dbReference>
<dbReference type="GO" id="GO:0004529">
    <property type="term" value="F:DNA exonuclease activity"/>
    <property type="evidence" value="ECO:0000318"/>
    <property type="project" value="GO_Central"/>
</dbReference>
<dbReference type="GO" id="GO:0004519">
    <property type="term" value="F:endonuclease activity"/>
    <property type="evidence" value="ECO:0007669"/>
    <property type="project" value="UniProtKB-KW"/>
</dbReference>
<dbReference type="GO" id="GO:0006310">
    <property type="term" value="P:DNA recombination"/>
    <property type="evidence" value="ECO:0007669"/>
    <property type="project" value="UniProtKB-KW"/>
</dbReference>
<dbReference type="GO" id="GO:0006281">
    <property type="term" value="P:DNA repair"/>
    <property type="evidence" value="ECO:0000318"/>
    <property type="project" value="GO_Central"/>
</dbReference>
<dbReference type="GO" id="GO:0006260">
    <property type="term" value="P:DNA replication"/>
    <property type="evidence" value="ECO:0007669"/>
    <property type="project" value="UniProtKB-KW"/>
</dbReference>
<dbReference type="GO" id="GO:0006302">
    <property type="term" value="P:double-strand break repair"/>
    <property type="evidence" value="ECO:0007669"/>
    <property type="project" value="InterPro"/>
</dbReference>
<dbReference type="Gene3D" id="3.40.50.300">
    <property type="entry name" value="P-loop containing nucleotide triphosphate hydrolases"/>
    <property type="match status" value="2"/>
</dbReference>
<dbReference type="InterPro" id="IPR027417">
    <property type="entry name" value="P-loop_NTPase"/>
</dbReference>
<dbReference type="InterPro" id="IPR038729">
    <property type="entry name" value="Rad50/SbcC_AAA"/>
</dbReference>
<dbReference type="PANTHER" id="PTHR32114">
    <property type="entry name" value="ABC TRANSPORTER ABCH.3"/>
    <property type="match status" value="1"/>
</dbReference>
<dbReference type="PANTHER" id="PTHR32114:SF2">
    <property type="entry name" value="ABC TRANSPORTER ABCH.3"/>
    <property type="match status" value="1"/>
</dbReference>
<dbReference type="Pfam" id="PF13476">
    <property type="entry name" value="AAA_23"/>
    <property type="match status" value="1"/>
</dbReference>
<dbReference type="Pfam" id="PF13558">
    <property type="entry name" value="SbcC_Walker_B"/>
    <property type="match status" value="1"/>
</dbReference>
<dbReference type="SUPFAM" id="SSF52540">
    <property type="entry name" value="P-loop containing nucleoside triphosphate hydrolases"/>
    <property type="match status" value="1"/>
</dbReference>
<keyword id="KW-0067">ATP-binding</keyword>
<keyword id="KW-0175">Coiled coil</keyword>
<keyword id="KW-0233">DNA recombination</keyword>
<keyword id="KW-0235">DNA replication</keyword>
<keyword id="KW-0255">Endonuclease</keyword>
<keyword id="KW-0269">Exonuclease</keyword>
<keyword id="KW-0378">Hydrolase</keyword>
<keyword id="KW-0540">Nuclease</keyword>
<keyword id="KW-0547">Nucleotide-binding</keyword>
<keyword id="KW-1185">Reference proteome</keyword>
<proteinExistence type="inferred from homology"/>
<gene>
    <name type="primary">sbcC</name>
    <name type="ordered locus">DR_1922</name>
</gene>
<accession>Q9RT44</accession>
<protein>
    <recommendedName>
        <fullName>Nuclease SbcCD subunit C</fullName>
    </recommendedName>
</protein>
<name>SBCC_DEIRA</name>
<organism>
    <name type="scientific">Deinococcus radiodurans (strain ATCC 13939 / DSM 20539 / JCM 16871 / CCUG 27074 / LMG 4051 / NBRC 15346 / NCIMB 9279 / VKM B-1422 / R1)</name>
    <dbReference type="NCBI Taxonomy" id="243230"/>
    <lineage>
        <taxon>Bacteria</taxon>
        <taxon>Thermotogati</taxon>
        <taxon>Deinococcota</taxon>
        <taxon>Deinococci</taxon>
        <taxon>Deinococcales</taxon>
        <taxon>Deinococcaceae</taxon>
        <taxon>Deinococcus</taxon>
    </lineage>
</organism>
<reference key="1">
    <citation type="journal article" date="1999" name="Science">
        <title>Genome sequence of the radioresistant bacterium Deinococcus radiodurans R1.</title>
        <authorList>
            <person name="White O."/>
            <person name="Eisen J.A."/>
            <person name="Heidelberg J.F."/>
            <person name="Hickey E.K."/>
            <person name="Peterson J.D."/>
            <person name="Dodson R.J."/>
            <person name="Haft D.H."/>
            <person name="Gwinn M.L."/>
            <person name="Nelson W.C."/>
            <person name="Richardson D.L."/>
            <person name="Moffat K.S."/>
            <person name="Qin H."/>
            <person name="Jiang L."/>
            <person name="Pamphile W."/>
            <person name="Crosby M."/>
            <person name="Shen M."/>
            <person name="Vamathevan J.J."/>
            <person name="Lam P."/>
            <person name="McDonald L.A."/>
            <person name="Utterback T.R."/>
            <person name="Zalewski C."/>
            <person name="Makarova K.S."/>
            <person name="Aravind L."/>
            <person name="Daly M.J."/>
            <person name="Minton K.W."/>
            <person name="Fleischmann R.D."/>
            <person name="Ketchum K.A."/>
            <person name="Nelson K.E."/>
            <person name="Salzberg S.L."/>
            <person name="Smith H.O."/>
            <person name="Venter J.C."/>
            <person name="Fraser C.M."/>
        </authorList>
    </citation>
    <scope>NUCLEOTIDE SEQUENCE [LARGE SCALE GENOMIC DNA]</scope>
    <source>
        <strain>ATCC 13939 / DSM 20539 / JCM 16871 / CCUG 27074 / LMG 4051 / NBRC 15346 / NCIMB 9279 / VKM B-1422 / R1</strain>
    </source>
</reference>
<evidence type="ECO:0000250" key="1"/>
<evidence type="ECO:0000255" key="2"/>
<evidence type="ECO:0000305" key="3"/>
<feature type="chain" id="PRO_0000105863" description="Nuclease SbcCD subunit C">
    <location>
        <begin position="1"/>
        <end position="909"/>
    </location>
</feature>
<feature type="coiled-coil region" evidence="2">
    <location>
        <begin position="204"/>
        <end position="250"/>
    </location>
</feature>
<feature type="coiled-coil region" evidence="2">
    <location>
        <begin position="285"/>
        <end position="453"/>
    </location>
</feature>
<feature type="coiled-coil region" evidence="2">
    <location>
        <begin position="484"/>
        <end position="549"/>
    </location>
</feature>
<feature type="coiled-coil region" evidence="2">
    <location>
        <begin position="576"/>
        <end position="614"/>
    </location>
</feature>
<feature type="coiled-coil region" evidence="2">
    <location>
        <begin position="652"/>
        <end position="751"/>
    </location>
</feature>
<feature type="binding site" evidence="2">
    <location>
        <begin position="32"/>
        <end position="39"/>
    </location>
    <ligand>
        <name>ATP</name>
        <dbReference type="ChEBI" id="CHEBI:30616"/>
    </ligand>
</feature>
<comment type="function">
    <text evidence="1">SbcCD cleaves DNA hairpin structures. These structures can inhibit DNA replication and are intermediates in certain DNA recombination reactions. The complex acts as a 3'-&gt;5' double strand exonuclease that can open hairpins. It also has a 5' single-strand endonuclease activity (By similarity).</text>
</comment>
<comment type="subunit">
    <text evidence="1">Heterodimer of SbcC and SbcD.</text>
</comment>
<comment type="similarity">
    <text evidence="3">Belongs to the SMC family. SbcC subfamily.</text>
</comment>
<sequence>MKPLHLTLRGFTAFRQTTDLDFADLELFALVGPTGSGKSSLLDAMTFALYGETARLGATGLDALISQGERTLSVALTFEAGGQTYRVTRTRGRKQADNEVRLDRLDPDGEWTGLSSGSQKDIAQRIEDVVGLDFDTFTRCVMLPQGQFAALLHGKPRQRQELLGELTGMGRVQQMQTFAADQVKDFKHQSQSLSSVLASEYAGVSEEAAAAVRAQREQTDADAERLLQQREELRTQLQRCANXXSLSSREDTARRLTVQESRXEGVRQGAERARRARQVAGVLPLLDAAERARIAYDRQTRELAGAESALQSAQAQAARADAALTQAQAQEPRIPELEEQANALREAEADAARLKRAGGSVQATHANPLPWDEDAFETAREAAQKLEKLRVERSILESEKAALKAALERYAQEERQQQEETAQLERVKADGLKAKEQLQVAQQREEEARMEAGLASYRSHLHEGEPCPLCLQTVHEVPEGESVDLDELRGQVNLLQKLVQERREHFTDLRGQLKTRQLWLDEKKSEYHDWNERNKQRELDARELERHISGNPQDDLQRLLASLAGRVRQAGANPAQARRDRLAEIQSIRSRIQEAQAALSRAQGDLAAAQATAQPRSMGGEREADHLAAADALTKALASLNLTAEAARTAGLPENEIAALEEGARKHEAEVAQLRAALADLDRQLGLEAFDPAHLAQVSRDLTASDAALSTAREQAGRLAEQERQLRDKLTRKADIETQAAEAGRQLDTWQTLNNALKVNEFQQFMLAEVEAQLLTRAGLLLFDISDGRYRLSLDKGEYVVQDLWNAGEVRAVKTLSGGETFLASLSLAIALSDYLAGNKVLGALFLDEGFGTLDPQALEAVATALENLRTQGRMVGIVTHVESLSERLPSRLLVSKSMAGSNVIRVDG</sequence>